<dbReference type="EMBL" id="CP000057">
    <property type="protein sequence ID" value="AAX87335.1"/>
    <property type="molecule type" value="Genomic_DNA"/>
</dbReference>
<dbReference type="RefSeq" id="WP_011271960.1">
    <property type="nucleotide sequence ID" value="NC_007146.2"/>
</dbReference>
<dbReference type="SMR" id="Q4QNR2"/>
<dbReference type="KEGG" id="hit:NTHI0386"/>
<dbReference type="HOGENOM" id="CLU_099590_0_1_6"/>
<dbReference type="Proteomes" id="UP000002525">
    <property type="component" value="Chromosome"/>
</dbReference>
<dbReference type="Gene3D" id="3.10.450.50">
    <property type="match status" value="1"/>
</dbReference>
<dbReference type="HAMAP" id="MF_00612">
    <property type="entry name" value="UPF0225"/>
    <property type="match status" value="1"/>
</dbReference>
<dbReference type="InterPro" id="IPR032710">
    <property type="entry name" value="NTF2-like_dom_sf"/>
</dbReference>
<dbReference type="InterPro" id="IPR023006">
    <property type="entry name" value="UPF0225"/>
</dbReference>
<dbReference type="InterPro" id="IPR048469">
    <property type="entry name" value="YchJ-like_M"/>
</dbReference>
<dbReference type="NCBIfam" id="NF002486">
    <property type="entry name" value="PRK01752.1"/>
    <property type="match status" value="1"/>
</dbReference>
<dbReference type="PANTHER" id="PTHR33747:SF1">
    <property type="entry name" value="ADENYLATE CYCLASE-ASSOCIATED CAP C-TERMINAL DOMAIN-CONTAINING PROTEIN"/>
    <property type="match status" value="1"/>
</dbReference>
<dbReference type="PANTHER" id="PTHR33747">
    <property type="entry name" value="UPF0225 PROTEIN SCO1677"/>
    <property type="match status" value="1"/>
</dbReference>
<dbReference type="Pfam" id="PF17775">
    <property type="entry name" value="YchJ_M-like"/>
    <property type="match status" value="1"/>
</dbReference>
<dbReference type="SUPFAM" id="SSF54427">
    <property type="entry name" value="NTF2-like"/>
    <property type="match status" value="1"/>
</dbReference>
<dbReference type="SUPFAM" id="SSF103642">
    <property type="entry name" value="Sec-C motif"/>
    <property type="match status" value="1"/>
</dbReference>
<protein>
    <recommendedName>
        <fullName evidence="1">UPF0225 protein NTHI0386</fullName>
    </recommendedName>
</protein>
<name>Y386_HAEI8</name>
<reference key="1">
    <citation type="journal article" date="2005" name="J. Bacteriol.">
        <title>Genomic sequence of an otitis media isolate of nontypeable Haemophilus influenzae: comparative study with H. influenzae serotype d, strain KW20.</title>
        <authorList>
            <person name="Harrison A."/>
            <person name="Dyer D.W."/>
            <person name="Gillaspy A."/>
            <person name="Ray W.C."/>
            <person name="Mungur R."/>
            <person name="Carson M.B."/>
            <person name="Zhong H."/>
            <person name="Gipson J."/>
            <person name="Gipson M."/>
            <person name="Johnson L.S."/>
            <person name="Lewis L."/>
            <person name="Bakaletz L.O."/>
            <person name="Munson R.S. Jr."/>
        </authorList>
    </citation>
    <scope>NUCLEOTIDE SEQUENCE [LARGE SCALE GENOMIC DNA]</scope>
    <source>
        <strain>86-028NP</strain>
    </source>
</reference>
<organism>
    <name type="scientific">Haemophilus influenzae (strain 86-028NP)</name>
    <dbReference type="NCBI Taxonomy" id="281310"/>
    <lineage>
        <taxon>Bacteria</taxon>
        <taxon>Pseudomonadati</taxon>
        <taxon>Pseudomonadota</taxon>
        <taxon>Gammaproteobacteria</taxon>
        <taxon>Pasteurellales</taxon>
        <taxon>Pasteurellaceae</taxon>
        <taxon>Haemophilus</taxon>
    </lineage>
</organism>
<sequence length="161" mass="18358">MSEISTALSLENCPCQSSHHYADCCGKFHLRQAFPETAEQLMRSRYTAYVLKNIPYIVVTTAPSQQTLLKPRLLQEWADNTTWLGLEILKTESLTKTQSAVEFKAIFQGEEGELAHQERSIFVKIENRWYFVDPTVSLPTMKQPCVCGYGKKFKHCCGGFL</sequence>
<gene>
    <name type="ordered locus">NTHI0386</name>
</gene>
<evidence type="ECO:0000255" key="1">
    <source>
        <dbReference type="HAMAP-Rule" id="MF_00612"/>
    </source>
</evidence>
<comment type="similarity">
    <text evidence="1">Belongs to the UPF0225 family.</text>
</comment>
<proteinExistence type="inferred from homology"/>
<feature type="chain" id="PRO_1000056726" description="UPF0225 protein NTHI0386">
    <location>
        <begin position="1"/>
        <end position="161"/>
    </location>
</feature>
<accession>Q4QNR2</accession>